<proteinExistence type="inferred from homology"/>
<gene>
    <name evidence="1" type="primary">glnD</name>
    <name type="ordered locus">NTHI2026</name>
</gene>
<accession>Q4QJM6</accession>
<evidence type="ECO:0000255" key="1">
    <source>
        <dbReference type="HAMAP-Rule" id="MF_00277"/>
    </source>
</evidence>
<evidence type="ECO:0000255" key="2">
    <source>
        <dbReference type="PROSITE-ProRule" id="PRU01175"/>
    </source>
</evidence>
<dbReference type="EC" id="2.7.7.59" evidence="1"/>
<dbReference type="EC" id="3.1.4.-" evidence="1"/>
<dbReference type="EMBL" id="CP000057">
    <property type="protein sequence ID" value="AAX88771.1"/>
    <property type="molecule type" value="Genomic_DNA"/>
</dbReference>
<dbReference type="RefSeq" id="WP_011272763.1">
    <property type="nucleotide sequence ID" value="NC_007146.2"/>
</dbReference>
<dbReference type="SMR" id="Q4QJM6"/>
<dbReference type="GeneID" id="93220728"/>
<dbReference type="KEGG" id="hit:NTHI2026"/>
<dbReference type="HOGENOM" id="CLU_012833_0_0_6"/>
<dbReference type="Proteomes" id="UP000002525">
    <property type="component" value="Chromosome"/>
</dbReference>
<dbReference type="GO" id="GO:0008773">
    <property type="term" value="F:[protein-PII] uridylyltransferase activity"/>
    <property type="evidence" value="ECO:0007669"/>
    <property type="project" value="UniProtKB-UniRule"/>
</dbReference>
<dbReference type="GO" id="GO:0008081">
    <property type="term" value="F:phosphoric diester hydrolase activity"/>
    <property type="evidence" value="ECO:0007669"/>
    <property type="project" value="UniProtKB-UniRule"/>
</dbReference>
<dbReference type="GO" id="GO:0006808">
    <property type="term" value="P:regulation of nitrogen utilization"/>
    <property type="evidence" value="ECO:0007669"/>
    <property type="project" value="UniProtKB-UniRule"/>
</dbReference>
<dbReference type="CDD" id="cd04899">
    <property type="entry name" value="ACT_ACR-UUR-like_2"/>
    <property type="match status" value="1"/>
</dbReference>
<dbReference type="CDD" id="cd04900">
    <property type="entry name" value="ACT_UUR-like_1"/>
    <property type="match status" value="1"/>
</dbReference>
<dbReference type="CDD" id="cd00077">
    <property type="entry name" value="HDc"/>
    <property type="match status" value="1"/>
</dbReference>
<dbReference type="CDD" id="cd05401">
    <property type="entry name" value="NT_GlnE_GlnD_like"/>
    <property type="match status" value="1"/>
</dbReference>
<dbReference type="Gene3D" id="1.10.3210.10">
    <property type="entry name" value="Hypothetical protein af1432"/>
    <property type="match status" value="1"/>
</dbReference>
<dbReference type="HAMAP" id="MF_00277">
    <property type="entry name" value="PII_uridylyl_transf"/>
    <property type="match status" value="1"/>
</dbReference>
<dbReference type="InterPro" id="IPR045865">
    <property type="entry name" value="ACT-like_dom_sf"/>
</dbReference>
<dbReference type="InterPro" id="IPR002912">
    <property type="entry name" value="ACT_dom"/>
</dbReference>
<dbReference type="InterPro" id="IPR003607">
    <property type="entry name" value="HD/PDEase_dom"/>
</dbReference>
<dbReference type="InterPro" id="IPR006674">
    <property type="entry name" value="HD_domain"/>
</dbReference>
<dbReference type="InterPro" id="IPR043519">
    <property type="entry name" value="NT_sf"/>
</dbReference>
<dbReference type="InterPro" id="IPR013546">
    <property type="entry name" value="PII_UdlTrfase/GS_AdlTrfase"/>
</dbReference>
<dbReference type="InterPro" id="IPR010043">
    <property type="entry name" value="UTase/UR"/>
</dbReference>
<dbReference type="NCBIfam" id="NF002487">
    <property type="entry name" value="PRK01759.1"/>
    <property type="match status" value="1"/>
</dbReference>
<dbReference type="NCBIfam" id="TIGR01693">
    <property type="entry name" value="UTase_glnD"/>
    <property type="match status" value="1"/>
</dbReference>
<dbReference type="PANTHER" id="PTHR47320">
    <property type="entry name" value="BIFUNCTIONAL URIDYLYLTRANSFERASE/URIDYLYL-REMOVING ENZYME"/>
    <property type="match status" value="1"/>
</dbReference>
<dbReference type="PANTHER" id="PTHR47320:SF1">
    <property type="entry name" value="BIFUNCTIONAL URIDYLYLTRANSFERASE_URIDYLYL-REMOVING ENZYME"/>
    <property type="match status" value="1"/>
</dbReference>
<dbReference type="Pfam" id="PF01842">
    <property type="entry name" value="ACT"/>
    <property type="match status" value="2"/>
</dbReference>
<dbReference type="Pfam" id="PF08335">
    <property type="entry name" value="GlnD_UR_UTase"/>
    <property type="match status" value="1"/>
</dbReference>
<dbReference type="Pfam" id="PF01966">
    <property type="entry name" value="HD"/>
    <property type="match status" value="1"/>
</dbReference>
<dbReference type="PIRSF" id="PIRSF006288">
    <property type="entry name" value="PII_uridyltransf"/>
    <property type="match status" value="1"/>
</dbReference>
<dbReference type="SMART" id="SM00471">
    <property type="entry name" value="HDc"/>
    <property type="match status" value="1"/>
</dbReference>
<dbReference type="SUPFAM" id="SSF55021">
    <property type="entry name" value="ACT-like"/>
    <property type="match status" value="2"/>
</dbReference>
<dbReference type="SUPFAM" id="SSF109604">
    <property type="entry name" value="HD-domain/PDEase-like"/>
    <property type="match status" value="1"/>
</dbReference>
<dbReference type="SUPFAM" id="SSF81301">
    <property type="entry name" value="Nucleotidyltransferase"/>
    <property type="match status" value="1"/>
</dbReference>
<dbReference type="SUPFAM" id="SSF81593">
    <property type="entry name" value="Nucleotidyltransferase substrate binding subunit/domain"/>
    <property type="match status" value="1"/>
</dbReference>
<dbReference type="PROSITE" id="PS51671">
    <property type="entry name" value="ACT"/>
    <property type="match status" value="2"/>
</dbReference>
<dbReference type="PROSITE" id="PS51831">
    <property type="entry name" value="HD"/>
    <property type="match status" value="1"/>
</dbReference>
<sequence>MLFSPTLSSPLTPSAVKIERENLKQFELENFSRYSIFELIENRCDFYDALLIQLWQEIELSEQLGIALIAVGGYGRREMFPLSDLDFLILVEQTPSPEIEEKITQFIQFLWDCGFEVGNSVRTLEQCESEGKQDITIATNLLEARFLAGNRPHFDALNELVKRADFWSKEDFFNAKVQEQIERYQRYHNTAYNLEPDIKYSPGGLRDLHLLYWVALRHSGALTLEAILQSGFIYPQEYQQLQESRAFLFKVRFALHLILKRYDNRLLFDRQIKVSELLGFRGEGNPAVEKMMKCFFQALHRISLISNLLIQHYRENVLPSNQDTVIDQLDDDFQLINQCLCLRNSFVFQEKPARILDLFFYLTQYEHANIHSDTLRQLQISLDQLSQKLCEIPAAREKFLRLFNQPNAIKRAFMPMHQYGVLTAYLPQWQAIEGLMQFDLFHIYTVDEHTLRVMLKLESFLSQESAQEHPIAHRIFSQLSDRTLLYIAALFHDIAKGRGGDHAELGAVDIADFAQLHGLDRREIDTLAWLVKSHLLMSITAQRRDIHDPEVVMNFAEAVQNQVRLDYLTCLTVADICATNGNLWNSWKRSLFASLYEFTGRQFSQGMKELLDYSEKSAENRKLAQQILMRDYSDITPISIEQLWARCPEDYFVRNTPKQIAWHTSLLVDFVEALLVKISNRFSLGGTEVFIYCQDQPHLFNKVVSTIGAKKFSIHDAQIITTQDGYVFDSFIITELNGELVEFDRRRELEQALTLALQSEKLPALSIVPNRQLQHFTVQTDVRFLQENKKEHTQMELVALDKAGLLAQVSQIFTELNLNLLNAKITTVGEKAEDFFILTNQFGQALDSQQREILRNVLYRNIG</sequence>
<reference key="1">
    <citation type="journal article" date="2005" name="J. Bacteriol.">
        <title>Genomic sequence of an otitis media isolate of nontypeable Haemophilus influenzae: comparative study with H. influenzae serotype d, strain KW20.</title>
        <authorList>
            <person name="Harrison A."/>
            <person name="Dyer D.W."/>
            <person name="Gillaspy A."/>
            <person name="Ray W.C."/>
            <person name="Mungur R."/>
            <person name="Carson M.B."/>
            <person name="Zhong H."/>
            <person name="Gipson J."/>
            <person name="Gipson M."/>
            <person name="Johnson L.S."/>
            <person name="Lewis L."/>
            <person name="Bakaletz L.O."/>
            <person name="Munson R.S. Jr."/>
        </authorList>
    </citation>
    <scope>NUCLEOTIDE SEQUENCE [LARGE SCALE GENOMIC DNA]</scope>
    <source>
        <strain>86-028NP</strain>
    </source>
</reference>
<organism>
    <name type="scientific">Haemophilus influenzae (strain 86-028NP)</name>
    <dbReference type="NCBI Taxonomy" id="281310"/>
    <lineage>
        <taxon>Bacteria</taxon>
        <taxon>Pseudomonadati</taxon>
        <taxon>Pseudomonadota</taxon>
        <taxon>Gammaproteobacteria</taxon>
        <taxon>Pasteurellales</taxon>
        <taxon>Pasteurellaceae</taxon>
        <taxon>Haemophilus</taxon>
    </lineage>
</organism>
<keyword id="KW-0378">Hydrolase</keyword>
<keyword id="KW-0460">Magnesium</keyword>
<keyword id="KW-0511">Multifunctional enzyme</keyword>
<keyword id="KW-0548">Nucleotidyltransferase</keyword>
<keyword id="KW-0677">Repeat</keyword>
<keyword id="KW-0808">Transferase</keyword>
<feature type="chain" id="PRO_0000192737" description="Bifunctional uridylyltransferase/uridylyl-removing enzyme">
    <location>
        <begin position="1"/>
        <end position="863"/>
    </location>
</feature>
<feature type="domain" description="HD" evidence="2">
    <location>
        <begin position="446"/>
        <end position="568"/>
    </location>
</feature>
<feature type="domain" description="ACT 1" evidence="1">
    <location>
        <begin position="688"/>
        <end position="772"/>
    </location>
</feature>
<feature type="domain" description="ACT 2" evidence="1">
    <location>
        <begin position="794"/>
        <end position="863"/>
    </location>
</feature>
<feature type="region of interest" description="Uridylyltransferase">
    <location>
        <begin position="1"/>
        <end position="328"/>
    </location>
</feature>
<feature type="region of interest" description="Uridylyl-removing">
    <location>
        <begin position="329"/>
        <end position="687"/>
    </location>
</feature>
<comment type="function">
    <text evidence="1">Modifies, by uridylylation and deuridylylation, the PII regulatory proteins (GlnB and homologs), in response to the nitrogen status of the cell that GlnD senses through the glutamine level. Under low glutamine levels, catalyzes the conversion of the PII proteins and UTP to PII-UMP and PPi, while under higher glutamine levels, GlnD hydrolyzes PII-UMP to PII and UMP (deuridylylation). Thus, controls uridylylation state and activity of the PII proteins, and plays an important role in the regulation of nitrogen assimilation and metabolism.</text>
</comment>
<comment type="catalytic activity">
    <reaction evidence="1">
        <text>[protein-PII]-L-tyrosine + UTP = [protein-PII]-uridylyl-L-tyrosine + diphosphate</text>
        <dbReference type="Rhea" id="RHEA:13673"/>
        <dbReference type="Rhea" id="RHEA-COMP:12147"/>
        <dbReference type="Rhea" id="RHEA-COMP:12148"/>
        <dbReference type="ChEBI" id="CHEBI:33019"/>
        <dbReference type="ChEBI" id="CHEBI:46398"/>
        <dbReference type="ChEBI" id="CHEBI:46858"/>
        <dbReference type="ChEBI" id="CHEBI:90602"/>
        <dbReference type="EC" id="2.7.7.59"/>
    </reaction>
</comment>
<comment type="catalytic activity">
    <reaction evidence="1">
        <text>[protein-PII]-uridylyl-L-tyrosine + H2O = [protein-PII]-L-tyrosine + UMP + H(+)</text>
        <dbReference type="Rhea" id="RHEA:48600"/>
        <dbReference type="Rhea" id="RHEA-COMP:12147"/>
        <dbReference type="Rhea" id="RHEA-COMP:12148"/>
        <dbReference type="ChEBI" id="CHEBI:15377"/>
        <dbReference type="ChEBI" id="CHEBI:15378"/>
        <dbReference type="ChEBI" id="CHEBI:46858"/>
        <dbReference type="ChEBI" id="CHEBI:57865"/>
        <dbReference type="ChEBI" id="CHEBI:90602"/>
    </reaction>
</comment>
<comment type="cofactor">
    <cofactor evidence="1">
        <name>Mg(2+)</name>
        <dbReference type="ChEBI" id="CHEBI:18420"/>
    </cofactor>
</comment>
<comment type="activity regulation">
    <text evidence="1">Uridylyltransferase (UTase) activity is inhibited by glutamine, while glutamine activates uridylyl-removing (UR) activity.</text>
</comment>
<comment type="domain">
    <text evidence="1">Has four distinct domains: an N-terminal nucleotidyltransferase (NT) domain responsible for UTase activity, a central HD domain that encodes UR activity, and two C-terminal ACT domains that seem to have a role in glutamine sensing.</text>
</comment>
<comment type="similarity">
    <text evidence="1">Belongs to the GlnD family.</text>
</comment>
<name>GLND_HAEI8</name>
<protein>
    <recommendedName>
        <fullName evidence="1">Bifunctional uridylyltransferase/uridylyl-removing enzyme</fullName>
        <shortName evidence="1">UTase/UR</shortName>
    </recommendedName>
    <alternativeName>
        <fullName evidence="1">Bifunctional [protein-PII] modification enzyme</fullName>
    </alternativeName>
    <alternativeName>
        <fullName evidence="1">Bifunctional nitrogen sensor protein</fullName>
    </alternativeName>
    <domain>
        <recommendedName>
            <fullName evidence="1">[Protein-PII] uridylyltransferase</fullName>
            <shortName evidence="1">PII uridylyltransferase</shortName>
            <shortName evidence="1">UTase</shortName>
            <ecNumber evidence="1">2.7.7.59</ecNumber>
        </recommendedName>
    </domain>
    <domain>
        <recommendedName>
            <fullName evidence="1">[Protein-PII]-UMP uridylyl-removing enzyme</fullName>
            <shortName evidence="1">UR</shortName>
            <ecNumber evidence="1">3.1.4.-</ecNumber>
        </recommendedName>
    </domain>
</protein>